<comment type="function">
    <text evidence="1">Component of the 17S U2 SnRNP complex of the spliceosome, a large ribonucleoprotein complex that removes introns from transcribed pre-mRNAs. The 17S U2 SnRNP complex (1) directly participates in early spliceosome assembly and (2) mediates recognition of the intron branch site during pre-mRNA splicing by promoting the selection of the pre-mRNA branch-site adenosine, the nucleophile for the first step of splicing. Within the 17S U2 SnRNP complex, SF3A3 is part of the SF3A subcomplex that contributes to the assembly of the 17S U2 snRNP, and the subsequent assembly of the pre-spliceosome 'E' complex and the pre-catalytic spliceosome 'A' complex. Involved in pre-mRNA splicing as a component of pre-catalytic spliceosome 'B' complexes.</text>
</comment>
<comment type="subunit">
    <text evidence="1">Component of the 17S U2 SnRNP complex, a ribonucleoprotein complex that contains small nuclear RNA (snRNA) U2 and a number of specific proteins. Part of the SF3A subcomplex of the 17S U2 SnRNP complex which is composed of three subunits; SF3A3/SAP61, SF3A2/SAP62 and SF3A1/SAP114. SF3A associates with the splicing factor SF3B and a 12S RNA unit to form the mature 17S U2 small nuclear ribonucleoprotein complex (17S U2 snRNP). Identified in the spliceosome 'E' complex, a precursor of the spliceosome 'A' complex. Identified in the spliceosome 'A' and 'B' complexes. Identified in the spliceosome 'C' complex.</text>
</comment>
<comment type="subcellular location">
    <subcellularLocation>
        <location evidence="1">Nucleus speckle</location>
    </subcellularLocation>
    <subcellularLocation>
        <location evidence="1">Nucleus</location>
    </subcellularLocation>
</comment>
<comment type="similarity">
    <text evidence="4">Belongs to the SF3A3 family.</text>
</comment>
<gene>
    <name type="primary">Sf3a3</name>
    <name type="synonym">Sap61</name>
</gene>
<reference key="1">
    <citation type="journal article" date="2004" name="Genome Res.">
        <title>The status, quality, and expansion of the NIH full-length cDNA project: the Mammalian Gene Collection (MGC).</title>
        <authorList>
            <consortium name="The MGC Project Team"/>
        </authorList>
    </citation>
    <scope>NUCLEOTIDE SEQUENCE [LARGE SCALE MRNA]</scope>
</reference>
<reference key="2">
    <citation type="journal article" date="2005" name="Science">
        <title>The transcriptional landscape of the mammalian genome.</title>
        <authorList>
            <person name="Carninci P."/>
            <person name="Kasukawa T."/>
            <person name="Katayama S."/>
            <person name="Gough J."/>
            <person name="Frith M.C."/>
            <person name="Maeda N."/>
            <person name="Oyama R."/>
            <person name="Ravasi T."/>
            <person name="Lenhard B."/>
            <person name="Wells C."/>
            <person name="Kodzius R."/>
            <person name="Shimokawa K."/>
            <person name="Bajic V.B."/>
            <person name="Brenner S.E."/>
            <person name="Batalov S."/>
            <person name="Forrest A.R."/>
            <person name="Zavolan M."/>
            <person name="Davis M.J."/>
            <person name="Wilming L.G."/>
            <person name="Aidinis V."/>
            <person name="Allen J.E."/>
            <person name="Ambesi-Impiombato A."/>
            <person name="Apweiler R."/>
            <person name="Aturaliya R.N."/>
            <person name="Bailey T.L."/>
            <person name="Bansal M."/>
            <person name="Baxter L."/>
            <person name="Beisel K.W."/>
            <person name="Bersano T."/>
            <person name="Bono H."/>
            <person name="Chalk A.M."/>
            <person name="Chiu K.P."/>
            <person name="Choudhary V."/>
            <person name="Christoffels A."/>
            <person name="Clutterbuck D.R."/>
            <person name="Crowe M.L."/>
            <person name="Dalla E."/>
            <person name="Dalrymple B.P."/>
            <person name="de Bono B."/>
            <person name="Della Gatta G."/>
            <person name="di Bernardo D."/>
            <person name="Down T."/>
            <person name="Engstrom P."/>
            <person name="Fagiolini M."/>
            <person name="Faulkner G."/>
            <person name="Fletcher C.F."/>
            <person name="Fukushima T."/>
            <person name="Furuno M."/>
            <person name="Futaki S."/>
            <person name="Gariboldi M."/>
            <person name="Georgii-Hemming P."/>
            <person name="Gingeras T.R."/>
            <person name="Gojobori T."/>
            <person name="Green R.E."/>
            <person name="Gustincich S."/>
            <person name="Harbers M."/>
            <person name="Hayashi Y."/>
            <person name="Hensch T.K."/>
            <person name="Hirokawa N."/>
            <person name="Hill D."/>
            <person name="Huminiecki L."/>
            <person name="Iacono M."/>
            <person name="Ikeo K."/>
            <person name="Iwama A."/>
            <person name="Ishikawa T."/>
            <person name="Jakt M."/>
            <person name="Kanapin A."/>
            <person name="Katoh M."/>
            <person name="Kawasawa Y."/>
            <person name="Kelso J."/>
            <person name="Kitamura H."/>
            <person name="Kitano H."/>
            <person name="Kollias G."/>
            <person name="Krishnan S.P."/>
            <person name="Kruger A."/>
            <person name="Kummerfeld S.K."/>
            <person name="Kurochkin I.V."/>
            <person name="Lareau L.F."/>
            <person name="Lazarevic D."/>
            <person name="Lipovich L."/>
            <person name="Liu J."/>
            <person name="Liuni S."/>
            <person name="McWilliam S."/>
            <person name="Madan Babu M."/>
            <person name="Madera M."/>
            <person name="Marchionni L."/>
            <person name="Matsuda H."/>
            <person name="Matsuzawa S."/>
            <person name="Miki H."/>
            <person name="Mignone F."/>
            <person name="Miyake S."/>
            <person name="Morris K."/>
            <person name="Mottagui-Tabar S."/>
            <person name="Mulder N."/>
            <person name="Nakano N."/>
            <person name="Nakauchi H."/>
            <person name="Ng P."/>
            <person name="Nilsson R."/>
            <person name="Nishiguchi S."/>
            <person name="Nishikawa S."/>
            <person name="Nori F."/>
            <person name="Ohara O."/>
            <person name="Okazaki Y."/>
            <person name="Orlando V."/>
            <person name="Pang K.C."/>
            <person name="Pavan W.J."/>
            <person name="Pavesi G."/>
            <person name="Pesole G."/>
            <person name="Petrovsky N."/>
            <person name="Piazza S."/>
            <person name="Reed J."/>
            <person name="Reid J.F."/>
            <person name="Ring B.Z."/>
            <person name="Ringwald M."/>
            <person name="Rost B."/>
            <person name="Ruan Y."/>
            <person name="Salzberg S.L."/>
            <person name="Sandelin A."/>
            <person name="Schneider C."/>
            <person name="Schoenbach C."/>
            <person name="Sekiguchi K."/>
            <person name="Semple C.A."/>
            <person name="Seno S."/>
            <person name="Sessa L."/>
            <person name="Sheng Y."/>
            <person name="Shibata Y."/>
            <person name="Shimada H."/>
            <person name="Shimada K."/>
            <person name="Silva D."/>
            <person name="Sinclair B."/>
            <person name="Sperling S."/>
            <person name="Stupka E."/>
            <person name="Sugiura K."/>
            <person name="Sultana R."/>
            <person name="Takenaka Y."/>
            <person name="Taki K."/>
            <person name="Tammoja K."/>
            <person name="Tan S.L."/>
            <person name="Tang S."/>
            <person name="Taylor M.S."/>
            <person name="Tegner J."/>
            <person name="Teichmann S.A."/>
            <person name="Ueda H.R."/>
            <person name="van Nimwegen E."/>
            <person name="Verardo R."/>
            <person name="Wei C.L."/>
            <person name="Yagi K."/>
            <person name="Yamanishi H."/>
            <person name="Zabarovsky E."/>
            <person name="Zhu S."/>
            <person name="Zimmer A."/>
            <person name="Hide W."/>
            <person name="Bult C."/>
            <person name="Grimmond S.M."/>
            <person name="Teasdale R.D."/>
            <person name="Liu E.T."/>
            <person name="Brusic V."/>
            <person name="Quackenbush J."/>
            <person name="Wahlestedt C."/>
            <person name="Mattick J.S."/>
            <person name="Hume D.A."/>
            <person name="Kai C."/>
            <person name="Sasaki D."/>
            <person name="Tomaru Y."/>
            <person name="Fukuda S."/>
            <person name="Kanamori-Katayama M."/>
            <person name="Suzuki M."/>
            <person name="Aoki J."/>
            <person name="Arakawa T."/>
            <person name="Iida J."/>
            <person name="Imamura K."/>
            <person name="Itoh M."/>
            <person name="Kato T."/>
            <person name="Kawaji H."/>
            <person name="Kawagashira N."/>
            <person name="Kawashima T."/>
            <person name="Kojima M."/>
            <person name="Kondo S."/>
            <person name="Konno H."/>
            <person name="Nakano K."/>
            <person name="Ninomiya N."/>
            <person name="Nishio T."/>
            <person name="Okada M."/>
            <person name="Plessy C."/>
            <person name="Shibata K."/>
            <person name="Shiraki T."/>
            <person name="Suzuki S."/>
            <person name="Tagami M."/>
            <person name="Waki K."/>
            <person name="Watahiki A."/>
            <person name="Okamura-Oho Y."/>
            <person name="Suzuki H."/>
            <person name="Kawai J."/>
            <person name="Hayashizaki Y."/>
        </authorList>
    </citation>
    <scope>NUCLEOTIDE SEQUENCE [LARGE SCALE MRNA] OF 1-169</scope>
    <source>
        <strain>C57BL/6J</strain>
        <tissue>Testis</tissue>
    </source>
</reference>
<reference key="3">
    <citation type="journal article" date="2010" name="Cell">
        <title>A tissue-specific atlas of mouse protein phosphorylation and expression.</title>
        <authorList>
            <person name="Huttlin E.L."/>
            <person name="Jedrychowski M.P."/>
            <person name="Elias J.E."/>
            <person name="Goswami T."/>
            <person name="Rad R."/>
            <person name="Beausoleil S.A."/>
            <person name="Villen J."/>
            <person name="Haas W."/>
            <person name="Sowa M.E."/>
            <person name="Gygi S.P."/>
        </authorList>
    </citation>
    <scope>IDENTIFICATION BY MASS SPECTROMETRY [LARGE SCALE ANALYSIS]</scope>
    <source>
        <tissue>Brown adipose tissue</tissue>
        <tissue>Lung</tissue>
        <tissue>Spleen</tissue>
        <tissue>Testis</tissue>
    </source>
</reference>
<sequence length="501" mass="58842">METILEQQRRYHEEKERLMDVMAKEMLTKKSTLRDQINSDHRTRAMQDRYMEVSGNLRDLYDDKDGLRKEELNAISGPNEFAEFYNRLKQIKEFHRKHPNEICVPMSVEFEELLKARENPSEEAQNLVEFTDEEGYGRYLDLHDCYLKYINLKASEKLDYITYLSIFDQLFDIPKERKNAEYKRYLEMLLEYLQDYTDRVKPLQDQNELFGKIQTDFEKKWDNGTFPGWPKETSSALTHAGAHLDLSAFSSWEELASLGLDRLKSALLALGLKCGGTLEERAQRLFSTKGKSLESLDTSLFAKNPKSKGTKRDTERNKDIAFLEAQIYEYVEILGEQRQLTHENVQRKQARTGEEREEEEEEQISESESEDEENEIIYNPKNLPLGWDGKPIPYWLYKLHGLNINYNCEICGNYTYRGPKAFQRHFAEWRHAHGMRCLGIPNTAHFANVTQIEDAVSLWAKLKLQKASERWQPDTEEEYEDSSGNVVNKKTYEDLKRQGLL</sequence>
<feature type="chain" id="PRO_0000174319" description="Splicing factor 3A subunit 3">
    <location>
        <begin position="1"/>
        <end position="501"/>
    </location>
</feature>
<feature type="zinc finger region" description="Matrin-type" evidence="2">
    <location>
        <begin position="406"/>
        <end position="437"/>
    </location>
</feature>
<feature type="region of interest" description="Disordered" evidence="3">
    <location>
        <begin position="342"/>
        <end position="374"/>
    </location>
</feature>
<feature type="short sequence motif" description="Nuclear localization signal" evidence="1">
    <location>
        <begin position="175"/>
        <end position="179"/>
    </location>
</feature>
<feature type="compositionally biased region" description="Basic and acidic residues" evidence="3">
    <location>
        <begin position="342"/>
        <end position="354"/>
    </location>
</feature>
<feature type="compositionally biased region" description="Acidic residues" evidence="3">
    <location>
        <begin position="355"/>
        <end position="374"/>
    </location>
</feature>
<feature type="modified residue" description="N-acetylmethionine" evidence="1">
    <location>
        <position position="1"/>
    </location>
</feature>
<feature type="modified residue" description="Phosphoserine" evidence="1">
    <location>
        <position position="54"/>
    </location>
</feature>
<feature type="modified residue" description="Phosphoserine" evidence="1">
    <location>
        <position position="121"/>
    </location>
</feature>
<feature type="modified residue" description="Phosphoserine" evidence="1">
    <location>
        <position position="295"/>
    </location>
</feature>
<feature type="modified residue" description="Phosphoserine" evidence="1">
    <location>
        <position position="299"/>
    </location>
</feature>
<feature type="modified residue" description="Phosphoserine" evidence="1">
    <location>
        <position position="365"/>
    </location>
</feature>
<feature type="modified residue" description="Phosphoserine" evidence="1">
    <location>
        <position position="367"/>
    </location>
</feature>
<feature type="modified residue" description="Phosphoserine" evidence="1">
    <location>
        <position position="369"/>
    </location>
</feature>
<feature type="modified residue" description="Phosphothreonine" evidence="1">
    <location>
        <position position="475"/>
    </location>
</feature>
<dbReference type="EMBL" id="BC009141">
    <property type="protein sequence ID" value="AAH09141.1"/>
    <property type="molecule type" value="mRNA"/>
</dbReference>
<dbReference type="EMBL" id="AK015776">
    <property type="protein sequence ID" value="BAB29971.1"/>
    <property type="molecule type" value="mRNA"/>
</dbReference>
<dbReference type="CCDS" id="CCDS38875.1"/>
<dbReference type="RefSeq" id="NP_083433.1">
    <property type="nucleotide sequence ID" value="NM_029157.4"/>
</dbReference>
<dbReference type="RefSeq" id="XP_036020403.1">
    <property type="nucleotide sequence ID" value="XM_036164510.1"/>
</dbReference>
<dbReference type="BMRB" id="Q9D554"/>
<dbReference type="SMR" id="Q9D554"/>
<dbReference type="BioGRID" id="217189">
    <property type="interactions" value="89"/>
</dbReference>
<dbReference type="FunCoup" id="Q9D554">
    <property type="interactions" value="4720"/>
</dbReference>
<dbReference type="IntAct" id="Q9D554">
    <property type="interactions" value="6"/>
</dbReference>
<dbReference type="STRING" id="10090.ENSMUSP00000030734"/>
<dbReference type="iPTMnet" id="Q9D554"/>
<dbReference type="PhosphoSitePlus" id="Q9D554"/>
<dbReference type="SwissPalm" id="Q9D554"/>
<dbReference type="jPOST" id="Q9D554"/>
<dbReference type="PaxDb" id="10090-ENSMUSP00000030734"/>
<dbReference type="ProteomicsDB" id="261175"/>
<dbReference type="Pumba" id="Q9D554"/>
<dbReference type="Antibodypedia" id="31818">
    <property type="antibodies" value="136 antibodies from 30 providers"/>
</dbReference>
<dbReference type="DNASU" id="75062"/>
<dbReference type="Ensembl" id="ENSMUST00000030734.5">
    <property type="protein sequence ID" value="ENSMUSP00000030734.5"/>
    <property type="gene ID" value="ENSMUSG00000028902.5"/>
</dbReference>
<dbReference type="GeneID" id="75062"/>
<dbReference type="KEGG" id="mmu:75062"/>
<dbReference type="UCSC" id="uc008uqx.1">
    <property type="organism name" value="mouse"/>
</dbReference>
<dbReference type="AGR" id="MGI:1922312"/>
<dbReference type="CTD" id="10946"/>
<dbReference type="MGI" id="MGI:1922312">
    <property type="gene designation" value="Sf3a3"/>
</dbReference>
<dbReference type="VEuPathDB" id="HostDB:ENSMUSG00000028902"/>
<dbReference type="eggNOG" id="KOG2636">
    <property type="taxonomic scope" value="Eukaryota"/>
</dbReference>
<dbReference type="GeneTree" id="ENSGT00530000063402"/>
<dbReference type="HOGENOM" id="CLU_027160_2_0_1"/>
<dbReference type="InParanoid" id="Q9D554"/>
<dbReference type="OMA" id="GPKAFQK"/>
<dbReference type="OrthoDB" id="2160351at2759"/>
<dbReference type="PhylomeDB" id="Q9D554"/>
<dbReference type="TreeFam" id="TF315227"/>
<dbReference type="Reactome" id="R-MMU-72163">
    <property type="pathway name" value="mRNA Splicing - Major Pathway"/>
</dbReference>
<dbReference type="BioGRID-ORCS" id="75062">
    <property type="hits" value="25 hits in 77 CRISPR screens"/>
</dbReference>
<dbReference type="ChiTaRS" id="Sf3a3">
    <property type="organism name" value="mouse"/>
</dbReference>
<dbReference type="PRO" id="PR:Q9D554"/>
<dbReference type="Proteomes" id="UP000000589">
    <property type="component" value="Chromosome 4"/>
</dbReference>
<dbReference type="RNAct" id="Q9D554">
    <property type="molecule type" value="protein"/>
</dbReference>
<dbReference type="Bgee" id="ENSMUSG00000028902">
    <property type="expression patterns" value="Expressed in otic placode and 271 other cell types or tissues"/>
</dbReference>
<dbReference type="ExpressionAtlas" id="Q9D554">
    <property type="expression patterns" value="baseline and differential"/>
</dbReference>
<dbReference type="GO" id="GO:0071013">
    <property type="term" value="C:catalytic step 2 spliceosome"/>
    <property type="evidence" value="ECO:0007669"/>
    <property type="project" value="Ensembl"/>
</dbReference>
<dbReference type="GO" id="GO:0016607">
    <property type="term" value="C:nuclear speck"/>
    <property type="evidence" value="ECO:0000250"/>
    <property type="project" value="UniProtKB"/>
</dbReference>
<dbReference type="GO" id="GO:0005686">
    <property type="term" value="C:U2 snRNP"/>
    <property type="evidence" value="ECO:0000314"/>
    <property type="project" value="MGI"/>
</dbReference>
<dbReference type="GO" id="GO:0071005">
    <property type="term" value="C:U2-type precatalytic spliceosome"/>
    <property type="evidence" value="ECO:0000250"/>
    <property type="project" value="UniProtKB"/>
</dbReference>
<dbReference type="GO" id="GO:0003723">
    <property type="term" value="F:RNA binding"/>
    <property type="evidence" value="ECO:0007669"/>
    <property type="project" value="InterPro"/>
</dbReference>
<dbReference type="GO" id="GO:0008270">
    <property type="term" value="F:zinc ion binding"/>
    <property type="evidence" value="ECO:0007669"/>
    <property type="project" value="UniProtKB-KW"/>
</dbReference>
<dbReference type="GO" id="GO:0000398">
    <property type="term" value="P:mRNA splicing, via spliceosome"/>
    <property type="evidence" value="ECO:0000250"/>
    <property type="project" value="UniProtKB"/>
</dbReference>
<dbReference type="GO" id="GO:1903241">
    <property type="term" value="P:U2-type prespliceosome assembly"/>
    <property type="evidence" value="ECO:0000250"/>
    <property type="project" value="UniProtKB"/>
</dbReference>
<dbReference type="InterPro" id="IPR000690">
    <property type="entry name" value="Matrin/U1-C_Znf_C2H2"/>
</dbReference>
<dbReference type="InterPro" id="IPR051421">
    <property type="entry name" value="RNA_Proc_DNA_Dmg_Regulator"/>
</dbReference>
<dbReference type="InterPro" id="IPR025086">
    <property type="entry name" value="SDE2/SF3A3_SAP"/>
</dbReference>
<dbReference type="InterPro" id="IPR031774">
    <property type="entry name" value="SF3A3_dom"/>
</dbReference>
<dbReference type="InterPro" id="IPR024598">
    <property type="entry name" value="SF3a60/Prp9_C"/>
</dbReference>
<dbReference type="InterPro" id="IPR021966">
    <property type="entry name" value="SF3a60_bindingd"/>
</dbReference>
<dbReference type="PANTHER" id="PTHR12786">
    <property type="entry name" value="SPLICING FACTOR SF3A-RELATED"/>
    <property type="match status" value="1"/>
</dbReference>
<dbReference type="PANTHER" id="PTHR12786:SF1">
    <property type="entry name" value="SPLICING REGULATOR SDE2"/>
    <property type="match status" value="1"/>
</dbReference>
<dbReference type="Pfam" id="PF13297">
    <property type="entry name" value="SDE2_2C"/>
    <property type="match status" value="1"/>
</dbReference>
<dbReference type="Pfam" id="PF16837">
    <property type="entry name" value="SF3A3"/>
    <property type="match status" value="1"/>
</dbReference>
<dbReference type="Pfam" id="PF12108">
    <property type="entry name" value="SF3a60_bindingd"/>
    <property type="match status" value="1"/>
</dbReference>
<dbReference type="Pfam" id="PF11931">
    <property type="entry name" value="SF3a60_Prp9_C"/>
    <property type="match status" value="1"/>
</dbReference>
<dbReference type="PROSITE" id="PS50171">
    <property type="entry name" value="ZF_MATRIN"/>
    <property type="match status" value="1"/>
</dbReference>
<proteinExistence type="evidence at protein level"/>
<protein>
    <recommendedName>
        <fullName>Splicing factor 3A subunit 3</fullName>
    </recommendedName>
    <alternativeName>
        <fullName>SF3a60</fullName>
    </alternativeName>
    <alternativeName>
        <fullName>Spliceosome-associated protein 61</fullName>
        <shortName>SAP 61</shortName>
    </alternativeName>
</protein>
<organism>
    <name type="scientific">Mus musculus</name>
    <name type="common">Mouse</name>
    <dbReference type="NCBI Taxonomy" id="10090"/>
    <lineage>
        <taxon>Eukaryota</taxon>
        <taxon>Metazoa</taxon>
        <taxon>Chordata</taxon>
        <taxon>Craniata</taxon>
        <taxon>Vertebrata</taxon>
        <taxon>Euteleostomi</taxon>
        <taxon>Mammalia</taxon>
        <taxon>Eutheria</taxon>
        <taxon>Euarchontoglires</taxon>
        <taxon>Glires</taxon>
        <taxon>Rodentia</taxon>
        <taxon>Myomorpha</taxon>
        <taxon>Muroidea</taxon>
        <taxon>Muridae</taxon>
        <taxon>Murinae</taxon>
        <taxon>Mus</taxon>
        <taxon>Mus</taxon>
    </lineage>
</organism>
<evidence type="ECO:0000250" key="1">
    <source>
        <dbReference type="UniProtKB" id="Q12874"/>
    </source>
</evidence>
<evidence type="ECO:0000255" key="2">
    <source>
        <dbReference type="PROSITE-ProRule" id="PRU00130"/>
    </source>
</evidence>
<evidence type="ECO:0000256" key="3">
    <source>
        <dbReference type="SAM" id="MobiDB-lite"/>
    </source>
</evidence>
<evidence type="ECO:0000305" key="4"/>
<keyword id="KW-0007">Acetylation</keyword>
<keyword id="KW-0479">Metal-binding</keyword>
<keyword id="KW-0507">mRNA processing</keyword>
<keyword id="KW-0508">mRNA splicing</keyword>
<keyword id="KW-0539">Nucleus</keyword>
<keyword id="KW-0597">Phosphoprotein</keyword>
<keyword id="KW-1185">Reference proteome</keyword>
<keyword id="KW-0747">Spliceosome</keyword>
<keyword id="KW-0862">Zinc</keyword>
<keyword id="KW-0863">Zinc-finger</keyword>
<accession>Q9D554</accession>
<name>SF3A3_MOUSE</name>